<proteinExistence type="inferred from homology"/>
<dbReference type="EMBL" id="CP001227">
    <property type="protein sequence ID" value="ACR47143.1"/>
    <property type="molecule type" value="Genomic_DNA"/>
</dbReference>
<dbReference type="RefSeq" id="WP_010976714.1">
    <property type="nucleotide sequence ID" value="NC_012730.1"/>
</dbReference>
<dbReference type="SMR" id="C4K0P2"/>
<dbReference type="KEGG" id="rpk:RPR_01055"/>
<dbReference type="HOGENOM" id="CLU_148047_4_0_5"/>
<dbReference type="Proteomes" id="UP000005015">
    <property type="component" value="Chromosome"/>
</dbReference>
<dbReference type="GO" id="GO:0005886">
    <property type="term" value="C:plasma membrane"/>
    <property type="evidence" value="ECO:0007669"/>
    <property type="project" value="UniProtKB-SubCell"/>
</dbReference>
<dbReference type="GO" id="GO:0045259">
    <property type="term" value="C:proton-transporting ATP synthase complex"/>
    <property type="evidence" value="ECO:0007669"/>
    <property type="project" value="UniProtKB-KW"/>
</dbReference>
<dbReference type="GO" id="GO:0033177">
    <property type="term" value="C:proton-transporting two-sector ATPase complex, proton-transporting domain"/>
    <property type="evidence" value="ECO:0007669"/>
    <property type="project" value="InterPro"/>
</dbReference>
<dbReference type="GO" id="GO:0008289">
    <property type="term" value="F:lipid binding"/>
    <property type="evidence" value="ECO:0007669"/>
    <property type="project" value="UniProtKB-KW"/>
</dbReference>
<dbReference type="GO" id="GO:0046933">
    <property type="term" value="F:proton-transporting ATP synthase activity, rotational mechanism"/>
    <property type="evidence" value="ECO:0007669"/>
    <property type="project" value="UniProtKB-UniRule"/>
</dbReference>
<dbReference type="CDD" id="cd18182">
    <property type="entry name" value="ATP-synt_Fo_c_ATP5G3"/>
    <property type="match status" value="1"/>
</dbReference>
<dbReference type="Gene3D" id="1.20.20.10">
    <property type="entry name" value="F1F0 ATP synthase subunit C"/>
    <property type="match status" value="1"/>
</dbReference>
<dbReference type="HAMAP" id="MF_01396">
    <property type="entry name" value="ATP_synth_c_bact"/>
    <property type="match status" value="1"/>
</dbReference>
<dbReference type="InterPro" id="IPR000454">
    <property type="entry name" value="ATP_synth_F0_csu"/>
</dbReference>
<dbReference type="InterPro" id="IPR020537">
    <property type="entry name" value="ATP_synth_F0_csu_DDCD_BS"/>
</dbReference>
<dbReference type="InterPro" id="IPR038662">
    <property type="entry name" value="ATP_synth_F0_csu_sf"/>
</dbReference>
<dbReference type="InterPro" id="IPR002379">
    <property type="entry name" value="ATPase_proteolipid_c-like_dom"/>
</dbReference>
<dbReference type="InterPro" id="IPR035921">
    <property type="entry name" value="F/V-ATP_Csub_sf"/>
</dbReference>
<dbReference type="NCBIfam" id="NF005733">
    <property type="entry name" value="PRK07558.1"/>
    <property type="match status" value="1"/>
</dbReference>
<dbReference type="PANTHER" id="PTHR10031">
    <property type="entry name" value="ATP SYNTHASE LIPID-BINDING PROTEIN, MITOCHONDRIAL"/>
    <property type="match status" value="1"/>
</dbReference>
<dbReference type="PANTHER" id="PTHR10031:SF0">
    <property type="entry name" value="ATPASE PROTEIN 9"/>
    <property type="match status" value="1"/>
</dbReference>
<dbReference type="Pfam" id="PF00137">
    <property type="entry name" value="ATP-synt_C"/>
    <property type="match status" value="1"/>
</dbReference>
<dbReference type="PRINTS" id="PR00124">
    <property type="entry name" value="ATPASEC"/>
</dbReference>
<dbReference type="SUPFAM" id="SSF81333">
    <property type="entry name" value="F1F0 ATP synthase subunit C"/>
    <property type="match status" value="1"/>
</dbReference>
<dbReference type="PROSITE" id="PS00605">
    <property type="entry name" value="ATPASE_C"/>
    <property type="match status" value="1"/>
</dbReference>
<accession>C4K0P2</accession>
<keyword id="KW-0066">ATP synthesis</keyword>
<keyword id="KW-0997">Cell inner membrane</keyword>
<keyword id="KW-1003">Cell membrane</keyword>
<keyword id="KW-0138">CF(0)</keyword>
<keyword id="KW-0375">Hydrogen ion transport</keyword>
<keyword id="KW-0406">Ion transport</keyword>
<keyword id="KW-0446">Lipid-binding</keyword>
<keyword id="KW-0472">Membrane</keyword>
<keyword id="KW-0812">Transmembrane</keyword>
<keyword id="KW-1133">Transmembrane helix</keyword>
<keyword id="KW-0813">Transport</keyword>
<gene>
    <name evidence="1" type="primary">atpE</name>
    <name type="ordered locus">RPR_01055</name>
</gene>
<organism>
    <name type="scientific">Rickettsia peacockii (strain Rustic)</name>
    <dbReference type="NCBI Taxonomy" id="562019"/>
    <lineage>
        <taxon>Bacteria</taxon>
        <taxon>Pseudomonadati</taxon>
        <taxon>Pseudomonadota</taxon>
        <taxon>Alphaproteobacteria</taxon>
        <taxon>Rickettsiales</taxon>
        <taxon>Rickettsiaceae</taxon>
        <taxon>Rickettsieae</taxon>
        <taxon>Rickettsia</taxon>
        <taxon>spotted fever group</taxon>
    </lineage>
</organism>
<feature type="chain" id="PRO_1000215167" description="ATP synthase subunit c">
    <location>
        <begin position="1"/>
        <end position="74"/>
    </location>
</feature>
<feature type="transmembrane region" description="Helical" evidence="1">
    <location>
        <begin position="8"/>
        <end position="28"/>
    </location>
</feature>
<feature type="transmembrane region" description="Helical" evidence="1">
    <location>
        <begin position="52"/>
        <end position="72"/>
    </location>
</feature>
<feature type="site" description="Reversibly protonated during proton transport" evidence="1">
    <location>
        <position position="58"/>
    </location>
</feature>
<evidence type="ECO:0000255" key="1">
    <source>
        <dbReference type="HAMAP-Rule" id="MF_01396"/>
    </source>
</evidence>
<sequence>MDMVSLKFIGTGLMAIGMYGAALGVSNIFSSLLSSIARNPSATENLQRMALIGAGLAEAMGLFSFVIAMLLIFS</sequence>
<comment type="function">
    <text evidence="1">F(1)F(0) ATP synthase produces ATP from ADP in the presence of a proton or sodium gradient. F-type ATPases consist of two structural domains, F(1) containing the extramembraneous catalytic core and F(0) containing the membrane proton channel, linked together by a central stalk and a peripheral stalk. During catalysis, ATP synthesis in the catalytic domain of F(1) is coupled via a rotary mechanism of the central stalk subunits to proton translocation.</text>
</comment>
<comment type="function">
    <text evidence="1">Key component of the F(0) channel; it plays a direct role in translocation across the membrane. A homomeric c-ring of between 10-14 subunits forms the central stalk rotor element with the F(1) delta and epsilon subunits.</text>
</comment>
<comment type="subunit">
    <text evidence="1">F-type ATPases have 2 components, F(1) - the catalytic core - and F(0) - the membrane proton channel. F(1) has five subunits: alpha(3), beta(3), gamma(1), delta(1), epsilon(1). F(0) has three main subunits: a(1), b(2) and c(10-14). The alpha and beta chains form an alternating ring which encloses part of the gamma chain. F(1) is attached to F(0) by a central stalk formed by the gamma and epsilon chains, while a peripheral stalk is formed by the delta and b chains.</text>
</comment>
<comment type="subcellular location">
    <subcellularLocation>
        <location evidence="1">Cell inner membrane</location>
        <topology evidence="1">Multi-pass membrane protein</topology>
    </subcellularLocation>
</comment>
<comment type="similarity">
    <text evidence="1">Belongs to the ATPase C chain family.</text>
</comment>
<reference key="1">
    <citation type="journal article" date="2009" name="PLoS ONE">
        <title>Genome sequence of the endosymbiont Rickettsia peacockii and comparison with virulent Rickettsia rickettsii: identification of virulence factors.</title>
        <authorList>
            <person name="Felsheim R.F."/>
            <person name="Kurtti T.J."/>
            <person name="Munderloh U.G."/>
        </authorList>
    </citation>
    <scope>NUCLEOTIDE SEQUENCE [LARGE SCALE GENOMIC DNA]</scope>
    <source>
        <strain>Rustic</strain>
    </source>
</reference>
<name>ATPL_RICPU</name>
<protein>
    <recommendedName>
        <fullName evidence="1">ATP synthase subunit c</fullName>
    </recommendedName>
    <alternativeName>
        <fullName evidence="1">ATP synthase F(0) sector subunit c</fullName>
    </alternativeName>
    <alternativeName>
        <fullName evidence="1">F-type ATPase subunit c</fullName>
        <shortName evidence="1">F-ATPase subunit c</shortName>
    </alternativeName>
    <alternativeName>
        <fullName evidence="1">Lipid-binding protein</fullName>
    </alternativeName>
</protein>